<dbReference type="EMBL" id="CP000958">
    <property type="protein sequence ID" value="ACA91010.1"/>
    <property type="molecule type" value="Genomic_DNA"/>
</dbReference>
<dbReference type="RefSeq" id="WP_006478665.1">
    <property type="nucleotide sequence ID" value="NC_010508.1"/>
</dbReference>
<dbReference type="SMR" id="B1JTA5"/>
<dbReference type="GeneID" id="93191823"/>
<dbReference type="KEGG" id="bcm:Bcenmc03_1849"/>
<dbReference type="HOGENOM" id="CLU_060739_1_2_4"/>
<dbReference type="Proteomes" id="UP000002169">
    <property type="component" value="Chromosome 1"/>
</dbReference>
<dbReference type="GO" id="GO:0003677">
    <property type="term" value="F:DNA binding"/>
    <property type="evidence" value="ECO:0007669"/>
    <property type="project" value="UniProtKB-UniRule"/>
</dbReference>
<dbReference type="GO" id="GO:0008270">
    <property type="term" value="F:zinc ion binding"/>
    <property type="evidence" value="ECO:0007669"/>
    <property type="project" value="UniProtKB-KW"/>
</dbReference>
<dbReference type="GO" id="GO:0006310">
    <property type="term" value="P:DNA recombination"/>
    <property type="evidence" value="ECO:0007669"/>
    <property type="project" value="UniProtKB-UniRule"/>
</dbReference>
<dbReference type="GO" id="GO:0006281">
    <property type="term" value="P:DNA repair"/>
    <property type="evidence" value="ECO:0007669"/>
    <property type="project" value="UniProtKB-UniRule"/>
</dbReference>
<dbReference type="CDD" id="cd01025">
    <property type="entry name" value="TOPRIM_recR"/>
    <property type="match status" value="1"/>
</dbReference>
<dbReference type="Gene3D" id="3.40.1360.10">
    <property type="match status" value="1"/>
</dbReference>
<dbReference type="Gene3D" id="6.10.250.240">
    <property type="match status" value="1"/>
</dbReference>
<dbReference type="Gene3D" id="1.10.8.420">
    <property type="entry name" value="RecR Domain 1"/>
    <property type="match status" value="1"/>
</dbReference>
<dbReference type="HAMAP" id="MF_00017">
    <property type="entry name" value="RecR"/>
    <property type="match status" value="1"/>
</dbReference>
<dbReference type="InterPro" id="IPR000093">
    <property type="entry name" value="DNA_Rcmb_RecR"/>
</dbReference>
<dbReference type="InterPro" id="IPR023627">
    <property type="entry name" value="Rcmb_RecR"/>
</dbReference>
<dbReference type="InterPro" id="IPR015967">
    <property type="entry name" value="Rcmb_RecR_Znf"/>
</dbReference>
<dbReference type="InterPro" id="IPR006171">
    <property type="entry name" value="TOPRIM_dom"/>
</dbReference>
<dbReference type="InterPro" id="IPR034137">
    <property type="entry name" value="TOPRIM_RecR"/>
</dbReference>
<dbReference type="NCBIfam" id="TIGR00615">
    <property type="entry name" value="recR"/>
    <property type="match status" value="1"/>
</dbReference>
<dbReference type="PANTHER" id="PTHR30446">
    <property type="entry name" value="RECOMBINATION PROTEIN RECR"/>
    <property type="match status" value="1"/>
</dbReference>
<dbReference type="PANTHER" id="PTHR30446:SF0">
    <property type="entry name" value="RECOMBINATION PROTEIN RECR"/>
    <property type="match status" value="1"/>
</dbReference>
<dbReference type="Pfam" id="PF21175">
    <property type="entry name" value="RecR_C"/>
    <property type="match status" value="1"/>
</dbReference>
<dbReference type="Pfam" id="PF21176">
    <property type="entry name" value="RecR_HhH"/>
    <property type="match status" value="1"/>
</dbReference>
<dbReference type="Pfam" id="PF02132">
    <property type="entry name" value="RecR_ZnF"/>
    <property type="match status" value="1"/>
</dbReference>
<dbReference type="Pfam" id="PF13662">
    <property type="entry name" value="Toprim_4"/>
    <property type="match status" value="1"/>
</dbReference>
<dbReference type="SMART" id="SM00493">
    <property type="entry name" value="TOPRIM"/>
    <property type="match status" value="1"/>
</dbReference>
<dbReference type="SUPFAM" id="SSF111304">
    <property type="entry name" value="Recombination protein RecR"/>
    <property type="match status" value="1"/>
</dbReference>
<dbReference type="PROSITE" id="PS01300">
    <property type="entry name" value="RECR"/>
    <property type="match status" value="1"/>
</dbReference>
<dbReference type="PROSITE" id="PS50880">
    <property type="entry name" value="TOPRIM"/>
    <property type="match status" value="1"/>
</dbReference>
<comment type="function">
    <text evidence="1">May play a role in DNA repair. It seems to be involved in an RecBC-independent recombinational process of DNA repair. It may act with RecF and RecO.</text>
</comment>
<comment type="similarity">
    <text evidence="1">Belongs to the RecR family.</text>
</comment>
<organism>
    <name type="scientific">Burkholderia orbicola (strain MC0-3)</name>
    <dbReference type="NCBI Taxonomy" id="406425"/>
    <lineage>
        <taxon>Bacteria</taxon>
        <taxon>Pseudomonadati</taxon>
        <taxon>Pseudomonadota</taxon>
        <taxon>Betaproteobacteria</taxon>
        <taxon>Burkholderiales</taxon>
        <taxon>Burkholderiaceae</taxon>
        <taxon>Burkholderia</taxon>
        <taxon>Burkholderia cepacia complex</taxon>
        <taxon>Burkholderia orbicola</taxon>
    </lineage>
</organism>
<proteinExistence type="inferred from homology"/>
<gene>
    <name evidence="1" type="primary">recR</name>
    <name type="ordered locus">Bcenmc03_1849</name>
</gene>
<accession>B1JTA5</accession>
<protein>
    <recommendedName>
        <fullName evidence="1">Recombination protein RecR</fullName>
    </recommendedName>
</protein>
<feature type="chain" id="PRO_1000089708" description="Recombination protein RecR">
    <location>
        <begin position="1"/>
        <end position="198"/>
    </location>
</feature>
<feature type="domain" description="Toprim" evidence="1">
    <location>
        <begin position="80"/>
        <end position="175"/>
    </location>
</feature>
<feature type="zinc finger region" description="C4-type" evidence="1">
    <location>
        <begin position="57"/>
        <end position="72"/>
    </location>
</feature>
<evidence type="ECO:0000255" key="1">
    <source>
        <dbReference type="HAMAP-Rule" id="MF_00017"/>
    </source>
</evidence>
<name>RECR_BURO0</name>
<reference key="1">
    <citation type="submission" date="2008-02" db="EMBL/GenBank/DDBJ databases">
        <title>Complete sequence of chromosome 1 of Burkholderia cenocepacia MC0-3.</title>
        <authorList>
            <person name="Copeland A."/>
            <person name="Lucas S."/>
            <person name="Lapidus A."/>
            <person name="Barry K."/>
            <person name="Bruce D."/>
            <person name="Goodwin L."/>
            <person name="Glavina del Rio T."/>
            <person name="Dalin E."/>
            <person name="Tice H."/>
            <person name="Pitluck S."/>
            <person name="Chain P."/>
            <person name="Malfatti S."/>
            <person name="Shin M."/>
            <person name="Vergez L."/>
            <person name="Schmutz J."/>
            <person name="Larimer F."/>
            <person name="Land M."/>
            <person name="Hauser L."/>
            <person name="Kyrpides N."/>
            <person name="Mikhailova N."/>
            <person name="Tiedje J."/>
            <person name="Richardson P."/>
        </authorList>
    </citation>
    <scope>NUCLEOTIDE SEQUENCE [LARGE SCALE GENOMIC DNA]</scope>
    <source>
        <strain>MC0-3</strain>
    </source>
</reference>
<sequence>MKQPSALSALVEALRVLPGVGPKSAQRMAVHLMQHDREGAERLGRSLLFATEHLQHCEKCNTFTEAQICEVCSDEERDPTLLCVVETPADQIMLEQTMTYRGLYFVLMGRLSPLDGIGPKEIHFDRLVRRASDGVVKEVVLATNFTNEGEATAHYLGQTLKARGLAVTRLARGVPVGGELEYVDAGTIARAMLDRRTM</sequence>
<keyword id="KW-0227">DNA damage</keyword>
<keyword id="KW-0233">DNA recombination</keyword>
<keyword id="KW-0234">DNA repair</keyword>
<keyword id="KW-0479">Metal-binding</keyword>
<keyword id="KW-0862">Zinc</keyword>
<keyword id="KW-0863">Zinc-finger</keyword>